<keyword id="KW-0256">Endoplasmic reticulum</keyword>
<keyword id="KW-0378">Hydrolase</keyword>
<keyword id="KW-0472">Membrane</keyword>
<keyword id="KW-0645">Protease</keyword>
<keyword id="KW-1185">Reference proteome</keyword>
<keyword id="KW-0735">Signal-anchor</keyword>
<keyword id="KW-0812">Transmembrane</keyword>
<keyword id="KW-1133">Transmembrane helix</keyword>
<feature type="chain" id="PRO_0000109546" description="Signal peptidase complex catalytic subunit SEC11A">
    <location>
        <begin position="1"/>
        <end position="179"/>
    </location>
</feature>
<feature type="topological domain" description="Cytoplasmic" evidence="1">
    <location>
        <begin position="1"/>
        <end position="16"/>
    </location>
</feature>
<feature type="transmembrane region" description="Helical; Signal-anchor for type II membrane protein" evidence="3">
    <location>
        <begin position="17"/>
        <end position="36"/>
    </location>
</feature>
<feature type="topological domain" description="Lumenal" evidence="1">
    <location>
        <begin position="37"/>
        <end position="179"/>
    </location>
</feature>
<feature type="region of interest" description="C-terminal short (CTS) helix" evidence="2">
    <location>
        <begin position="165"/>
        <end position="176"/>
    </location>
</feature>
<feature type="active site" description="Charge relay system" evidence="2">
    <location>
        <position position="56"/>
    </location>
</feature>
<feature type="active site" description="Charge relay system" evidence="2">
    <location>
        <position position="96"/>
    </location>
</feature>
<feature type="active site" description="Charge relay system" evidence="2">
    <location>
        <position position="122"/>
    </location>
</feature>
<organism>
    <name type="scientific">Rattus norvegicus</name>
    <name type="common">Rat</name>
    <dbReference type="NCBI Taxonomy" id="10116"/>
    <lineage>
        <taxon>Eukaryota</taxon>
        <taxon>Metazoa</taxon>
        <taxon>Chordata</taxon>
        <taxon>Craniata</taxon>
        <taxon>Vertebrata</taxon>
        <taxon>Euteleostomi</taxon>
        <taxon>Mammalia</taxon>
        <taxon>Eutheria</taxon>
        <taxon>Euarchontoglires</taxon>
        <taxon>Glires</taxon>
        <taxon>Rodentia</taxon>
        <taxon>Myomorpha</taxon>
        <taxon>Muroidea</taxon>
        <taxon>Muridae</taxon>
        <taxon>Murinae</taxon>
        <taxon>Rattus</taxon>
    </lineage>
</organism>
<name>SC11A_RAT</name>
<proteinExistence type="evidence at transcript level"/>
<comment type="function">
    <text evidence="2">Catalytic component of the signal peptidase complex (SPC) which catalyzes the cleavage of N-terminal signal sequences from nascent proteins as they are translocated into the lumen of the endoplasmic reticulum. Specifically cleaves N-terminal signal peptides that contain a hydrophobic alpha-helix (h-region) shorter than 18-20 amino acids.</text>
</comment>
<comment type="catalytic activity">
    <reaction evidence="2">
        <text>Cleavage of hydrophobic, N-terminal signal or leader sequences from secreted and periplasmic proteins.</text>
        <dbReference type="EC" id="3.4.21.89"/>
    </reaction>
</comment>
<comment type="subunit">
    <text evidence="2">Component of the signal peptidase complex paralog A (SPC-A) composed of a catalytic subunit SEC11A and three accessory subunits SPCS1, SPCS2 and SPCS3. Within the complex, interacts with SPCS2 and SPCS3. The complex induces a local thinning of the ER membrane which is used to measure the length of the signal peptide (SP) h-region of protein substrates. This ensures the selectivity of the complex towards h-regions shorter than 18-20 amino acids.</text>
</comment>
<comment type="subcellular location">
    <subcellularLocation>
        <location evidence="1">Endoplasmic reticulum membrane</location>
        <topology evidence="1">Single-pass type II membrane protein</topology>
    </subcellularLocation>
</comment>
<comment type="domain">
    <text evidence="2">The C-terminal short (CTS) helix is essential for catalytic activity. It may be accommodated as a transmembrane helix in the thinned membrane environment of the complex, similarly to the signal peptide in the complex substrates.</text>
</comment>
<comment type="similarity">
    <text evidence="4">Belongs to the peptidase S26B family.</text>
</comment>
<dbReference type="EC" id="3.4.21.89" evidence="2"/>
<dbReference type="EMBL" id="L11319">
    <property type="protein sequence ID" value="AAA64738.1"/>
    <property type="molecule type" value="mRNA"/>
</dbReference>
<dbReference type="PIR" id="I57489">
    <property type="entry name" value="I57489"/>
</dbReference>
<dbReference type="SMR" id="P42667"/>
<dbReference type="FunCoup" id="P42667">
    <property type="interactions" value="2485"/>
</dbReference>
<dbReference type="IntAct" id="P42667">
    <property type="interactions" value="1"/>
</dbReference>
<dbReference type="STRING" id="10116.ENSRNOP00000015218"/>
<dbReference type="MEROPS" id="S26.009"/>
<dbReference type="iPTMnet" id="P42667"/>
<dbReference type="PhosphoSitePlus" id="P42667"/>
<dbReference type="jPOST" id="P42667"/>
<dbReference type="PaxDb" id="10116-ENSRNOP00000015218"/>
<dbReference type="UCSC" id="RGD:69360">
    <property type="organism name" value="rat"/>
</dbReference>
<dbReference type="AGR" id="RGD:69360"/>
<dbReference type="RGD" id="69360">
    <property type="gene designation" value="Sec11a"/>
</dbReference>
<dbReference type="eggNOG" id="KOG3342">
    <property type="taxonomic scope" value="Eukaryota"/>
</dbReference>
<dbReference type="InParanoid" id="P42667"/>
<dbReference type="PhylomeDB" id="P42667"/>
<dbReference type="Reactome" id="R-RNO-422085">
    <property type="pathway name" value="Synthesis, secretion, and deacylation of Ghrelin"/>
</dbReference>
<dbReference type="PRO" id="PR:P42667"/>
<dbReference type="Proteomes" id="UP000002494">
    <property type="component" value="Unplaced"/>
</dbReference>
<dbReference type="GO" id="GO:0005789">
    <property type="term" value="C:endoplasmic reticulum membrane"/>
    <property type="evidence" value="ECO:0000266"/>
    <property type="project" value="RGD"/>
</dbReference>
<dbReference type="GO" id="GO:0005787">
    <property type="term" value="C:signal peptidase complex"/>
    <property type="evidence" value="ECO:0000250"/>
    <property type="project" value="UniProtKB"/>
</dbReference>
<dbReference type="GO" id="GO:0008233">
    <property type="term" value="F:peptidase activity"/>
    <property type="evidence" value="ECO:0000318"/>
    <property type="project" value="GO_Central"/>
</dbReference>
<dbReference type="GO" id="GO:0004252">
    <property type="term" value="F:serine-type endopeptidase activity"/>
    <property type="evidence" value="ECO:0000250"/>
    <property type="project" value="UniProtKB"/>
</dbReference>
<dbReference type="GO" id="GO:0006465">
    <property type="term" value="P:signal peptide processing"/>
    <property type="evidence" value="ECO:0000250"/>
    <property type="project" value="UniProtKB"/>
</dbReference>
<dbReference type="CDD" id="cd06530">
    <property type="entry name" value="S26_SPase_I"/>
    <property type="match status" value="1"/>
</dbReference>
<dbReference type="FunFam" id="2.10.109.10:FF:000003">
    <property type="entry name" value="Signal peptidase complex catalytic subunit SEC11"/>
    <property type="match status" value="1"/>
</dbReference>
<dbReference type="Gene3D" id="2.10.109.10">
    <property type="entry name" value="Umud Fragment, subunit A"/>
    <property type="match status" value="1"/>
</dbReference>
<dbReference type="InterPro" id="IPR036286">
    <property type="entry name" value="LexA/Signal_pep-like_sf"/>
</dbReference>
<dbReference type="InterPro" id="IPR019758">
    <property type="entry name" value="Pept_S26A_signal_pept_1_CS"/>
</dbReference>
<dbReference type="InterPro" id="IPR019756">
    <property type="entry name" value="Pept_S26A_signal_pept_1_Ser-AS"/>
</dbReference>
<dbReference type="InterPro" id="IPR015927">
    <property type="entry name" value="Peptidase_S24_S26A/B/C"/>
</dbReference>
<dbReference type="InterPro" id="IPR019533">
    <property type="entry name" value="Peptidase_S26"/>
</dbReference>
<dbReference type="InterPro" id="IPR001733">
    <property type="entry name" value="Peptidase_S26B"/>
</dbReference>
<dbReference type="NCBIfam" id="TIGR02228">
    <property type="entry name" value="sigpep_I_arch"/>
    <property type="match status" value="1"/>
</dbReference>
<dbReference type="PANTHER" id="PTHR10806">
    <property type="entry name" value="SIGNAL PEPTIDASE COMPLEX CATALYTIC SUBUNIT SEC11"/>
    <property type="match status" value="1"/>
</dbReference>
<dbReference type="PANTHER" id="PTHR10806:SF28">
    <property type="entry name" value="SIGNAL PEPTIDASE COMPLEX CATALYTIC SUBUNIT SEC11B-RELATED"/>
    <property type="match status" value="1"/>
</dbReference>
<dbReference type="Pfam" id="PF00717">
    <property type="entry name" value="Peptidase_S24"/>
    <property type="match status" value="1"/>
</dbReference>
<dbReference type="PRINTS" id="PR00728">
    <property type="entry name" value="SIGNALPTASE"/>
</dbReference>
<dbReference type="SUPFAM" id="SSF51306">
    <property type="entry name" value="LexA/Signal peptidase"/>
    <property type="match status" value="1"/>
</dbReference>
<dbReference type="PROSITE" id="PS00501">
    <property type="entry name" value="SPASE_I_1"/>
    <property type="match status" value="1"/>
</dbReference>
<dbReference type="PROSITE" id="PS00761">
    <property type="entry name" value="SPASE_I_3"/>
    <property type="match status" value="1"/>
</dbReference>
<reference key="1">
    <citation type="journal article" date="1994" name="Mol. Cell. Biochem.">
        <title>Induction of ethanol dependence increases signal peptidase mRNA levels in rat brain.</title>
        <authorList>
            <person name="Signs S.A."/>
            <person name="Difeo-Jacquet R."/>
        </authorList>
    </citation>
    <scope>NUCLEOTIDE SEQUENCE [MRNA]</scope>
    <source>
        <strain>Sprague-Dawley</strain>
        <tissue>Brain</tissue>
    </source>
</reference>
<protein>
    <recommendedName>
        <fullName>Signal peptidase complex catalytic subunit SEC11A</fullName>
        <ecNumber evidence="2">3.4.21.89</ecNumber>
    </recommendedName>
    <alternativeName>
        <fullName>Endopeptidase SP18</fullName>
    </alternativeName>
    <alternativeName>
        <fullName>Microsomal signal peptidase 18 kDa subunit</fullName>
        <shortName>SPase 18 kDa subunit</shortName>
    </alternativeName>
    <alternativeName>
        <fullName>SEC11 homolog A</fullName>
    </alternativeName>
    <alternativeName>
        <fullName>SEC11-like protein 1</fullName>
    </alternativeName>
    <alternativeName>
        <fullName>SPC18</fullName>
    </alternativeName>
</protein>
<sequence>MLSLDFLDDVRRMNKRQLYYQVLNFGMIVSSALMIWKGLMLITGSESPIVVVLSGSMEPAFHRGDLLFLTNRVEDPIRVGEIVVFRIEGREIPIVHRVLKIHEKQDGHIKFLTKGDNNAVDDRGLYKQGQHWLEKKDVVGRARGFVPYIGIVTILMNDYPKFSYAVLFLLGLFVLVHRE</sequence>
<evidence type="ECO:0000250" key="1">
    <source>
        <dbReference type="UniProtKB" id="P67811"/>
    </source>
</evidence>
<evidence type="ECO:0000250" key="2">
    <source>
        <dbReference type="UniProtKB" id="P67812"/>
    </source>
</evidence>
<evidence type="ECO:0000255" key="3"/>
<evidence type="ECO:0000305" key="4"/>
<gene>
    <name type="primary">Sec11a</name>
    <name type="synonym">Sec11l1</name>
    <name type="synonym">Spc18</name>
</gene>
<accession>P42667</accession>